<accession>A5IYV8</accession>
<name>RL17_MYCAP</name>
<comment type="subunit">
    <text evidence="1">Part of the 50S ribosomal subunit. Contacts protein L32.</text>
</comment>
<comment type="similarity">
    <text evidence="1">Belongs to the bacterial ribosomal protein bL17 family.</text>
</comment>
<keyword id="KW-1185">Reference proteome</keyword>
<keyword id="KW-0687">Ribonucleoprotein</keyword>
<keyword id="KW-0689">Ribosomal protein</keyword>
<protein>
    <recommendedName>
        <fullName evidence="1">Large ribosomal subunit protein bL17</fullName>
    </recommendedName>
    <alternativeName>
        <fullName evidence="2">50S ribosomal protein L17</fullName>
    </alternativeName>
</protein>
<sequence>MANPTQIYSRDVKWRKGVMRTLVSELFANGRITTTLTRAKELRRHAEKLITKAKNPTLANRRICASFLRPTLVEEGKKDVLKHLFDTIAPSYAKRNGGYTRIYKLVNRQGDNAPMAIIELV</sequence>
<reference key="1">
    <citation type="journal article" date="2007" name="PLoS Genet.">
        <title>Being pathogenic, plastic, and sexual while living with a nearly minimal bacterial genome.</title>
        <authorList>
            <person name="Sirand-Pugnet P."/>
            <person name="Lartigue C."/>
            <person name="Marenda M."/>
            <person name="Jacob D."/>
            <person name="Barre A."/>
            <person name="Barbe V."/>
            <person name="Schenowitz C."/>
            <person name="Mangenot S."/>
            <person name="Couloux A."/>
            <person name="Segurens B."/>
            <person name="de Daruvar A."/>
            <person name="Blanchard A."/>
            <person name="Citti C."/>
        </authorList>
    </citation>
    <scope>NUCLEOTIDE SEQUENCE [LARGE SCALE GENOMIC DNA]</scope>
    <source>
        <strain>NCTC 10123 / CIP 59.7 / PG2</strain>
    </source>
</reference>
<evidence type="ECO:0000255" key="1">
    <source>
        <dbReference type="HAMAP-Rule" id="MF_01368"/>
    </source>
</evidence>
<evidence type="ECO:0000305" key="2"/>
<organism>
    <name type="scientific">Mycoplasmopsis agalactiae (strain NCTC 10123 / CIP 59.7 / PG2)</name>
    <name type="common">Mycoplasma agalactiae</name>
    <dbReference type="NCBI Taxonomy" id="347257"/>
    <lineage>
        <taxon>Bacteria</taxon>
        <taxon>Bacillati</taxon>
        <taxon>Mycoplasmatota</taxon>
        <taxon>Mycoplasmoidales</taxon>
        <taxon>Metamycoplasmataceae</taxon>
        <taxon>Mycoplasmopsis</taxon>
    </lineage>
</organism>
<dbReference type="EMBL" id="CU179680">
    <property type="protein sequence ID" value="CAL59217.1"/>
    <property type="molecule type" value="Genomic_DNA"/>
</dbReference>
<dbReference type="RefSeq" id="WP_011949685.1">
    <property type="nucleotide sequence ID" value="NC_009497.1"/>
</dbReference>
<dbReference type="SMR" id="A5IYV8"/>
<dbReference type="STRING" id="347257.MAG5190"/>
<dbReference type="GeneID" id="93358258"/>
<dbReference type="KEGG" id="maa:MAG5190"/>
<dbReference type="HOGENOM" id="CLU_074407_2_2_14"/>
<dbReference type="Proteomes" id="UP000007065">
    <property type="component" value="Chromosome"/>
</dbReference>
<dbReference type="GO" id="GO:0022625">
    <property type="term" value="C:cytosolic large ribosomal subunit"/>
    <property type="evidence" value="ECO:0007669"/>
    <property type="project" value="TreeGrafter"/>
</dbReference>
<dbReference type="GO" id="GO:0003735">
    <property type="term" value="F:structural constituent of ribosome"/>
    <property type="evidence" value="ECO:0007669"/>
    <property type="project" value="InterPro"/>
</dbReference>
<dbReference type="GO" id="GO:0006412">
    <property type="term" value="P:translation"/>
    <property type="evidence" value="ECO:0007669"/>
    <property type="project" value="UniProtKB-UniRule"/>
</dbReference>
<dbReference type="Gene3D" id="3.90.1030.10">
    <property type="entry name" value="Ribosomal protein L17"/>
    <property type="match status" value="1"/>
</dbReference>
<dbReference type="HAMAP" id="MF_01368">
    <property type="entry name" value="Ribosomal_bL17"/>
    <property type="match status" value="1"/>
</dbReference>
<dbReference type="InterPro" id="IPR000456">
    <property type="entry name" value="Ribosomal_bL17"/>
</dbReference>
<dbReference type="InterPro" id="IPR047859">
    <property type="entry name" value="Ribosomal_bL17_CS"/>
</dbReference>
<dbReference type="InterPro" id="IPR036373">
    <property type="entry name" value="Ribosomal_bL17_sf"/>
</dbReference>
<dbReference type="NCBIfam" id="TIGR00059">
    <property type="entry name" value="L17"/>
    <property type="match status" value="1"/>
</dbReference>
<dbReference type="PANTHER" id="PTHR14413:SF16">
    <property type="entry name" value="LARGE RIBOSOMAL SUBUNIT PROTEIN BL17M"/>
    <property type="match status" value="1"/>
</dbReference>
<dbReference type="PANTHER" id="PTHR14413">
    <property type="entry name" value="RIBOSOMAL PROTEIN L17"/>
    <property type="match status" value="1"/>
</dbReference>
<dbReference type="Pfam" id="PF01196">
    <property type="entry name" value="Ribosomal_L17"/>
    <property type="match status" value="1"/>
</dbReference>
<dbReference type="SUPFAM" id="SSF64263">
    <property type="entry name" value="Prokaryotic ribosomal protein L17"/>
    <property type="match status" value="1"/>
</dbReference>
<dbReference type="PROSITE" id="PS01167">
    <property type="entry name" value="RIBOSOMAL_L17"/>
    <property type="match status" value="1"/>
</dbReference>
<proteinExistence type="inferred from homology"/>
<feature type="chain" id="PRO_1000144453" description="Large ribosomal subunit protein bL17">
    <location>
        <begin position="1"/>
        <end position="121"/>
    </location>
</feature>
<gene>
    <name evidence="1" type="primary">rplQ</name>
    <name type="ordered locus">MAG5190</name>
</gene>